<proteinExistence type="inferred from homology"/>
<gene>
    <name evidence="1" type="primary">hemA</name>
    <name type="ordered locus">Patl_2564</name>
</gene>
<dbReference type="EC" id="1.2.1.70" evidence="1"/>
<dbReference type="EMBL" id="CP000388">
    <property type="protein sequence ID" value="ABG41080.1"/>
    <property type="molecule type" value="Genomic_DNA"/>
</dbReference>
<dbReference type="RefSeq" id="WP_011575345.1">
    <property type="nucleotide sequence ID" value="NC_008228.1"/>
</dbReference>
<dbReference type="SMR" id="Q15SQ8"/>
<dbReference type="STRING" id="342610.Patl_2564"/>
<dbReference type="KEGG" id="pat:Patl_2564"/>
<dbReference type="eggNOG" id="COG0373">
    <property type="taxonomic scope" value="Bacteria"/>
</dbReference>
<dbReference type="HOGENOM" id="CLU_035113_2_2_6"/>
<dbReference type="OrthoDB" id="110209at2"/>
<dbReference type="UniPathway" id="UPA00251">
    <property type="reaction ID" value="UER00316"/>
</dbReference>
<dbReference type="Proteomes" id="UP000001981">
    <property type="component" value="Chromosome"/>
</dbReference>
<dbReference type="GO" id="GO:0008883">
    <property type="term" value="F:glutamyl-tRNA reductase activity"/>
    <property type="evidence" value="ECO:0007669"/>
    <property type="project" value="UniProtKB-UniRule"/>
</dbReference>
<dbReference type="GO" id="GO:0050661">
    <property type="term" value="F:NADP binding"/>
    <property type="evidence" value="ECO:0007669"/>
    <property type="project" value="InterPro"/>
</dbReference>
<dbReference type="GO" id="GO:0019353">
    <property type="term" value="P:protoporphyrinogen IX biosynthetic process from glutamate"/>
    <property type="evidence" value="ECO:0007669"/>
    <property type="project" value="TreeGrafter"/>
</dbReference>
<dbReference type="CDD" id="cd05213">
    <property type="entry name" value="NAD_bind_Glutamyl_tRNA_reduct"/>
    <property type="match status" value="1"/>
</dbReference>
<dbReference type="FunFam" id="3.30.460.30:FF:000001">
    <property type="entry name" value="Glutamyl-tRNA reductase"/>
    <property type="match status" value="1"/>
</dbReference>
<dbReference type="FunFam" id="3.40.50.720:FF:000031">
    <property type="entry name" value="Glutamyl-tRNA reductase"/>
    <property type="match status" value="1"/>
</dbReference>
<dbReference type="Gene3D" id="3.30.460.30">
    <property type="entry name" value="Glutamyl-tRNA reductase, N-terminal domain"/>
    <property type="match status" value="1"/>
</dbReference>
<dbReference type="Gene3D" id="3.40.50.720">
    <property type="entry name" value="NAD(P)-binding Rossmann-like Domain"/>
    <property type="match status" value="1"/>
</dbReference>
<dbReference type="HAMAP" id="MF_00087">
    <property type="entry name" value="Glu_tRNA_reductase"/>
    <property type="match status" value="1"/>
</dbReference>
<dbReference type="InterPro" id="IPR000343">
    <property type="entry name" value="4pyrrol_synth_GluRdtase"/>
</dbReference>
<dbReference type="InterPro" id="IPR015896">
    <property type="entry name" value="4pyrrol_synth_GluRdtase_dimer"/>
</dbReference>
<dbReference type="InterPro" id="IPR015895">
    <property type="entry name" value="4pyrrol_synth_GluRdtase_N"/>
</dbReference>
<dbReference type="InterPro" id="IPR018214">
    <property type="entry name" value="GluRdtase_CS"/>
</dbReference>
<dbReference type="InterPro" id="IPR036453">
    <property type="entry name" value="GluRdtase_dimer_dom_sf"/>
</dbReference>
<dbReference type="InterPro" id="IPR036343">
    <property type="entry name" value="GluRdtase_N_sf"/>
</dbReference>
<dbReference type="InterPro" id="IPR036291">
    <property type="entry name" value="NAD(P)-bd_dom_sf"/>
</dbReference>
<dbReference type="InterPro" id="IPR006151">
    <property type="entry name" value="Shikm_DH/Glu-tRNA_Rdtase"/>
</dbReference>
<dbReference type="NCBIfam" id="TIGR01035">
    <property type="entry name" value="hemA"/>
    <property type="match status" value="1"/>
</dbReference>
<dbReference type="PANTHER" id="PTHR43013">
    <property type="entry name" value="GLUTAMYL-TRNA REDUCTASE"/>
    <property type="match status" value="1"/>
</dbReference>
<dbReference type="PANTHER" id="PTHR43013:SF1">
    <property type="entry name" value="GLUTAMYL-TRNA REDUCTASE"/>
    <property type="match status" value="1"/>
</dbReference>
<dbReference type="Pfam" id="PF00745">
    <property type="entry name" value="GlutR_dimer"/>
    <property type="match status" value="1"/>
</dbReference>
<dbReference type="Pfam" id="PF05201">
    <property type="entry name" value="GlutR_N"/>
    <property type="match status" value="1"/>
</dbReference>
<dbReference type="Pfam" id="PF01488">
    <property type="entry name" value="Shikimate_DH"/>
    <property type="match status" value="1"/>
</dbReference>
<dbReference type="PIRSF" id="PIRSF000445">
    <property type="entry name" value="4pyrrol_synth_GluRdtase"/>
    <property type="match status" value="1"/>
</dbReference>
<dbReference type="SUPFAM" id="SSF69742">
    <property type="entry name" value="Glutamyl tRNA-reductase catalytic, N-terminal domain"/>
    <property type="match status" value="1"/>
</dbReference>
<dbReference type="SUPFAM" id="SSF69075">
    <property type="entry name" value="Glutamyl tRNA-reductase dimerization domain"/>
    <property type="match status" value="1"/>
</dbReference>
<dbReference type="SUPFAM" id="SSF51735">
    <property type="entry name" value="NAD(P)-binding Rossmann-fold domains"/>
    <property type="match status" value="1"/>
</dbReference>
<dbReference type="PROSITE" id="PS00747">
    <property type="entry name" value="GLUTR"/>
    <property type="match status" value="1"/>
</dbReference>
<evidence type="ECO:0000255" key="1">
    <source>
        <dbReference type="HAMAP-Rule" id="MF_00087"/>
    </source>
</evidence>
<reference key="1">
    <citation type="submission" date="2006-06" db="EMBL/GenBank/DDBJ databases">
        <title>Complete sequence of Pseudoalteromonas atlantica T6c.</title>
        <authorList>
            <consortium name="US DOE Joint Genome Institute"/>
            <person name="Copeland A."/>
            <person name="Lucas S."/>
            <person name="Lapidus A."/>
            <person name="Barry K."/>
            <person name="Detter J.C."/>
            <person name="Glavina del Rio T."/>
            <person name="Hammon N."/>
            <person name="Israni S."/>
            <person name="Dalin E."/>
            <person name="Tice H."/>
            <person name="Pitluck S."/>
            <person name="Saunders E."/>
            <person name="Brettin T."/>
            <person name="Bruce D."/>
            <person name="Han C."/>
            <person name="Tapia R."/>
            <person name="Gilna P."/>
            <person name="Schmutz J."/>
            <person name="Larimer F."/>
            <person name="Land M."/>
            <person name="Hauser L."/>
            <person name="Kyrpides N."/>
            <person name="Kim E."/>
            <person name="Karls A.C."/>
            <person name="Bartlett D."/>
            <person name="Higgins B.P."/>
            <person name="Richardson P."/>
        </authorList>
    </citation>
    <scope>NUCLEOTIDE SEQUENCE [LARGE SCALE GENOMIC DNA]</scope>
    <source>
        <strain>T6c / ATCC BAA-1087</strain>
    </source>
</reference>
<protein>
    <recommendedName>
        <fullName evidence="1">Glutamyl-tRNA reductase</fullName>
        <shortName evidence="1">GluTR</shortName>
        <ecNumber evidence="1">1.2.1.70</ecNumber>
    </recommendedName>
</protein>
<accession>Q15SQ8</accession>
<organism>
    <name type="scientific">Pseudoalteromonas atlantica (strain T6c / ATCC BAA-1087)</name>
    <dbReference type="NCBI Taxonomy" id="3042615"/>
    <lineage>
        <taxon>Bacteria</taxon>
        <taxon>Pseudomonadati</taxon>
        <taxon>Pseudomonadota</taxon>
        <taxon>Gammaproteobacteria</taxon>
        <taxon>Alteromonadales</taxon>
        <taxon>Alteromonadaceae</taxon>
        <taxon>Paraglaciecola</taxon>
    </lineage>
</organism>
<name>HEM1_PSEA6</name>
<sequence length="423" mass="46521">MTLIAFGINHKTAPVELREKVAFSPDAMVEALKSLAHLTGADESVIVSTCNRTEIYAQAENLTADALTTWLAEFHQAKADELGLNSYIYHQEDAIKHIMRVACGLDSLILGEPQILGQVKQAFVSAKDSGVIKSDFERLFQQTFSVAKRVRSETEIGSNAVSVAYASVQLAKHIFSSLKKSNVLLIGAGETIELVAKHMHEQGVKKLSVANRTLARAEAIAQPLGATTLTLTQIPAHLKDADIVISSTASQLPILGKGLVERALKDRRHKPMFLVDLAVPRDIEAEVGELDDAYLYTVDDLQQIVEKNIESRQHAALQAQQMIEEQAQQYMLWRQGQSSIDVLRDFRQQSESQRDTLIAKALNQLADGKEAEQVIKELANKLTNSLIHAPTKALKKAAMQQDNKNMSLLQDALGLARANDSSK</sequence>
<comment type="function">
    <text evidence="1">Catalyzes the NADPH-dependent reduction of glutamyl-tRNA(Glu) to glutamate 1-semialdehyde (GSA).</text>
</comment>
<comment type="catalytic activity">
    <reaction evidence="1">
        <text>(S)-4-amino-5-oxopentanoate + tRNA(Glu) + NADP(+) = L-glutamyl-tRNA(Glu) + NADPH + H(+)</text>
        <dbReference type="Rhea" id="RHEA:12344"/>
        <dbReference type="Rhea" id="RHEA-COMP:9663"/>
        <dbReference type="Rhea" id="RHEA-COMP:9680"/>
        <dbReference type="ChEBI" id="CHEBI:15378"/>
        <dbReference type="ChEBI" id="CHEBI:57501"/>
        <dbReference type="ChEBI" id="CHEBI:57783"/>
        <dbReference type="ChEBI" id="CHEBI:58349"/>
        <dbReference type="ChEBI" id="CHEBI:78442"/>
        <dbReference type="ChEBI" id="CHEBI:78520"/>
        <dbReference type="EC" id="1.2.1.70"/>
    </reaction>
</comment>
<comment type="pathway">
    <text evidence="1">Porphyrin-containing compound metabolism; protoporphyrin-IX biosynthesis; 5-aminolevulinate from L-glutamyl-tRNA(Glu): step 1/2.</text>
</comment>
<comment type="subunit">
    <text evidence="1">Homodimer.</text>
</comment>
<comment type="domain">
    <text evidence="1">Possesses an unusual extended V-shaped dimeric structure with each monomer consisting of three distinct domains arranged along a curved 'spinal' alpha-helix. The N-terminal catalytic domain specifically recognizes the glutamate moiety of the substrate. The second domain is the NADPH-binding domain, and the third C-terminal domain is responsible for dimerization.</text>
</comment>
<comment type="miscellaneous">
    <text evidence="1">During catalysis, the active site Cys acts as a nucleophile attacking the alpha-carbonyl group of tRNA-bound glutamate with the formation of a thioester intermediate between enzyme and glutamate, and the concomitant release of tRNA(Glu). The thioester intermediate is finally reduced by direct hydride transfer from NADPH, to form the product GSA.</text>
</comment>
<comment type="similarity">
    <text evidence="1">Belongs to the glutamyl-tRNA reductase family.</text>
</comment>
<feature type="chain" id="PRO_1000004669" description="Glutamyl-tRNA reductase">
    <location>
        <begin position="1"/>
        <end position="423"/>
    </location>
</feature>
<feature type="active site" description="Nucleophile" evidence="1">
    <location>
        <position position="50"/>
    </location>
</feature>
<feature type="binding site" evidence="1">
    <location>
        <begin position="49"/>
        <end position="52"/>
    </location>
    <ligand>
        <name>substrate</name>
    </ligand>
</feature>
<feature type="binding site" evidence="1">
    <location>
        <position position="107"/>
    </location>
    <ligand>
        <name>substrate</name>
    </ligand>
</feature>
<feature type="binding site" evidence="1">
    <location>
        <begin position="112"/>
        <end position="114"/>
    </location>
    <ligand>
        <name>substrate</name>
    </ligand>
</feature>
<feature type="binding site" evidence="1">
    <location>
        <position position="118"/>
    </location>
    <ligand>
        <name>substrate</name>
    </ligand>
</feature>
<feature type="binding site" evidence="1">
    <location>
        <begin position="187"/>
        <end position="192"/>
    </location>
    <ligand>
        <name>NADP(+)</name>
        <dbReference type="ChEBI" id="CHEBI:58349"/>
    </ligand>
</feature>
<feature type="site" description="Important for activity" evidence="1">
    <location>
        <position position="97"/>
    </location>
</feature>
<keyword id="KW-0521">NADP</keyword>
<keyword id="KW-0560">Oxidoreductase</keyword>
<keyword id="KW-0627">Porphyrin biosynthesis</keyword>